<feature type="chain" id="PRO_0000046757" description="DNA primase small subunit PriS">
    <location>
        <begin position="1"/>
        <end position="333"/>
    </location>
</feature>
<feature type="active site" evidence="1">
    <location>
        <position position="96"/>
    </location>
</feature>
<feature type="active site" evidence="1">
    <location>
        <position position="98"/>
    </location>
</feature>
<feature type="active site" evidence="1">
    <location>
        <position position="237"/>
    </location>
</feature>
<sequence length="333" mass="38387">MMRDFVSEEKLKLLFEKYYRSTDIDPPALITKREVGFMTFEGEIIRHMHLSNKFELNNMLRTTVPRHVYSSAAYYKKPDEKKMPEKIWEGADLIFDLDSDHLPGAEKMTYEEMLNSIKEQTKRLVNKFLVSDLGISEKDIRIYFSGSRGYHVHVSSEDVYPLGSDARREITDYVSGNSLSISVIDKALKTGEKRPGGWIKDVISKLYELGINAEKISQKQIERAIDQVKSHNATMVDAPVTYDIHRLIRMPQSLHGKSGMMVKEVDLDKFDDFDPLSDAIPKIFLEGDYDINVHEKTRKLRLLDYKIDLPPGRNRVPQYVAIFLVSSGRADFL</sequence>
<keyword id="KW-0235">DNA replication</keyword>
<keyword id="KW-0240">DNA-directed RNA polymerase</keyword>
<keyword id="KW-0460">Magnesium</keyword>
<keyword id="KW-0464">Manganese</keyword>
<keyword id="KW-0479">Metal-binding</keyword>
<keyword id="KW-0548">Nucleotidyltransferase</keyword>
<keyword id="KW-0639">Primosome</keyword>
<keyword id="KW-0804">Transcription</keyword>
<keyword id="KW-0808">Transferase</keyword>
<evidence type="ECO:0000255" key="1">
    <source>
        <dbReference type="HAMAP-Rule" id="MF_00700"/>
    </source>
</evidence>
<name>PRIS_THEVO</name>
<proteinExistence type="inferred from homology"/>
<accession>Q979L5</accession>
<organism>
    <name type="scientific">Thermoplasma volcanium (strain ATCC 51530 / DSM 4299 / JCM 9571 / NBRC 15438 / GSS1)</name>
    <dbReference type="NCBI Taxonomy" id="273116"/>
    <lineage>
        <taxon>Archaea</taxon>
        <taxon>Methanobacteriati</taxon>
        <taxon>Thermoplasmatota</taxon>
        <taxon>Thermoplasmata</taxon>
        <taxon>Thermoplasmatales</taxon>
        <taxon>Thermoplasmataceae</taxon>
        <taxon>Thermoplasma</taxon>
    </lineage>
</organism>
<dbReference type="EC" id="2.7.7.-" evidence="1"/>
<dbReference type="EMBL" id="BA000011">
    <property type="protein sequence ID" value="BAB60287.1"/>
    <property type="molecule type" value="Genomic_DNA"/>
</dbReference>
<dbReference type="SMR" id="Q979L5"/>
<dbReference type="STRING" id="273116.gene:9381944"/>
<dbReference type="PaxDb" id="273116-14325383"/>
<dbReference type="KEGG" id="tvo:TVG1172230"/>
<dbReference type="eggNOG" id="arCOG04110">
    <property type="taxonomic scope" value="Archaea"/>
</dbReference>
<dbReference type="HOGENOM" id="CLU_056123_1_0_2"/>
<dbReference type="PhylomeDB" id="Q979L5"/>
<dbReference type="Proteomes" id="UP000001017">
    <property type="component" value="Chromosome"/>
</dbReference>
<dbReference type="GO" id="GO:0000428">
    <property type="term" value="C:DNA-directed RNA polymerase complex"/>
    <property type="evidence" value="ECO:0007669"/>
    <property type="project" value="UniProtKB-KW"/>
</dbReference>
<dbReference type="GO" id="GO:1990077">
    <property type="term" value="C:primosome complex"/>
    <property type="evidence" value="ECO:0007669"/>
    <property type="project" value="UniProtKB-KW"/>
</dbReference>
<dbReference type="GO" id="GO:0003899">
    <property type="term" value="F:DNA-directed RNA polymerase activity"/>
    <property type="evidence" value="ECO:0007669"/>
    <property type="project" value="InterPro"/>
</dbReference>
<dbReference type="GO" id="GO:0046872">
    <property type="term" value="F:metal ion binding"/>
    <property type="evidence" value="ECO:0007669"/>
    <property type="project" value="UniProtKB-KW"/>
</dbReference>
<dbReference type="GO" id="GO:0006269">
    <property type="term" value="P:DNA replication, synthesis of primer"/>
    <property type="evidence" value="ECO:0007669"/>
    <property type="project" value="UniProtKB-UniRule"/>
</dbReference>
<dbReference type="CDD" id="cd04860">
    <property type="entry name" value="AE_Prim_S"/>
    <property type="match status" value="1"/>
</dbReference>
<dbReference type="Gene3D" id="3.90.920.10">
    <property type="entry name" value="DNA primase, PRIM domain"/>
    <property type="match status" value="1"/>
</dbReference>
<dbReference type="HAMAP" id="MF_00700">
    <property type="entry name" value="DNA_primase_sml_arc"/>
    <property type="match status" value="1"/>
</dbReference>
<dbReference type="InterPro" id="IPR002755">
    <property type="entry name" value="DNA_primase_S"/>
</dbReference>
<dbReference type="InterPro" id="IPR014052">
    <property type="entry name" value="DNA_primase_ssu_euk/arc"/>
</dbReference>
<dbReference type="InterPro" id="IPR023639">
    <property type="entry name" value="DNA_primase_ssu_PriS"/>
</dbReference>
<dbReference type="NCBIfam" id="NF001641">
    <property type="entry name" value="PRK00419.1-3"/>
    <property type="match status" value="1"/>
</dbReference>
<dbReference type="PANTHER" id="PTHR10536">
    <property type="entry name" value="DNA PRIMASE SMALL SUBUNIT"/>
    <property type="match status" value="1"/>
</dbReference>
<dbReference type="Pfam" id="PF01896">
    <property type="entry name" value="DNA_primase_S"/>
    <property type="match status" value="1"/>
</dbReference>
<dbReference type="SUPFAM" id="SSF56747">
    <property type="entry name" value="Prim-pol domain"/>
    <property type="match status" value="1"/>
</dbReference>
<comment type="function">
    <text evidence="1">Catalytic subunit of DNA primase, an RNA polymerase that catalyzes the synthesis of short RNA molecules used as primers for DNA polymerase during DNA replication. The small subunit contains the primase catalytic core and has DNA synthesis activity on its own. Binding to the large subunit stabilizes and modulates the activity, increasing the rate of DNA synthesis while decreasing the length of the DNA fragments, and conferring RNA synthesis capability. The DNA polymerase activity may enable DNA primase to also catalyze primer extension after primer synthesis. May also play a role in DNA repair.</text>
</comment>
<comment type="cofactor">
    <cofactor evidence="1">
        <name>Mg(2+)</name>
        <dbReference type="ChEBI" id="CHEBI:18420"/>
    </cofactor>
    <cofactor evidence="1">
        <name>Mn(2+)</name>
        <dbReference type="ChEBI" id="CHEBI:29035"/>
    </cofactor>
</comment>
<comment type="subunit">
    <text evidence="1">Heterodimer of a small subunit (PriS) and a large subunit (PriL).</text>
</comment>
<comment type="similarity">
    <text evidence="1">Belongs to the eukaryotic-type primase small subunit family.</text>
</comment>
<protein>
    <recommendedName>
        <fullName evidence="1">DNA primase small subunit PriS</fullName>
        <ecNumber evidence="1">2.7.7.-</ecNumber>
    </recommendedName>
</protein>
<gene>
    <name evidence="1" type="primary">priS</name>
    <name type="synonym">priA</name>
    <name type="ordered locus">TV1145</name>
    <name type="ORF">TVG1172230</name>
</gene>
<reference key="1">
    <citation type="journal article" date="2000" name="Proc. Natl. Acad. Sci. U.S.A.">
        <title>Archaeal adaptation to higher temperatures revealed by genomic sequence of Thermoplasma volcanium.</title>
        <authorList>
            <person name="Kawashima T."/>
            <person name="Amano N."/>
            <person name="Koike H."/>
            <person name="Makino S."/>
            <person name="Higuchi S."/>
            <person name="Kawashima-Ohya Y."/>
            <person name="Watanabe K."/>
            <person name="Yamazaki M."/>
            <person name="Kanehori K."/>
            <person name="Kawamoto T."/>
            <person name="Nunoshiba T."/>
            <person name="Yamamoto Y."/>
            <person name="Aramaki H."/>
            <person name="Makino K."/>
            <person name="Suzuki M."/>
        </authorList>
    </citation>
    <scope>NUCLEOTIDE SEQUENCE [LARGE SCALE GENOMIC DNA]</scope>
    <source>
        <strain>ATCC 51530 / DSM 4299 / JCM 9571 / NBRC 15438 / GSS1</strain>
    </source>
</reference>